<proteinExistence type="predicted"/>
<protein>
    <recommendedName>
        <fullName>Regulatory protein NosR</fullName>
    </recommendedName>
</protein>
<feature type="chain" id="PRO_0000096954" description="Regulatory protein NosR">
    <location>
        <begin position="1"/>
        <end position="724"/>
    </location>
</feature>
<feature type="DNA-binding region" description="H-T-H motif" evidence="1">
    <location>
        <begin position="215"/>
        <end position="234"/>
    </location>
</feature>
<gene>
    <name type="primary">nosR</name>
</gene>
<sequence>MASREIWSLAGTFSTWVKGFFILLILSVCASSLQAKEYAAEQQRLDKFFPGASLSAAEGDYQVRTITKGDEVLGYAFQSIRVTDMPAYSGKPINMQILLDPEGVIVDAYMLEHHEPIVLIGIPEQKVHDFNANYSGIHVDQRVVVGRSSDKSAVTVDAVTGATVTVMVINEIVMRAAHTVAVDLGLVEAGATARPKPALVREDVFQPTSWTELVGNGAIRRMHLTRGQVDDAFKGTEAEGVDVAAAEQRDETFIDLYATHLNPPTIGRNLLGERQYADLMANLKPGEHAFAVLANGEYSFKGSGYVRGGIFDRVQLRQFGDTISFRDLDFIRLSDVYAEGMPEFFEMAIFTAREQYRFDPGSPWNLELLVRRQVGPVESIFTSFEMPYVMPEEYIERVPLTAEELAAIEEANRPLWVNIWYQKSFQVGVILVALALLTVILFLQDKFTQHPNFLKRLRHGYLVFTVVFIGWYALGQLSVVNVLTFVHALVQDFRWELFLTDPVIFILWVFTAASILLWGRGVFCGWLCPFGALQELINEAARKLKIPQYDLPFSVHERLWAIKYIVLLVLFGISLESMMMAEKAAEIEPFKTAITLKFDRQWWFVAYAVFLLVINIFTRKVYCRYVCPLGAGLAITGRFRLFDWLKRRKECGNPCQICANECEVQAIHPDGHINHNECHYCLDCQMTYHNENKCPPLIAKNKRARRDKKAPAAPQLIPVQVVEP</sequence>
<evidence type="ECO:0000255" key="1"/>
<evidence type="ECO:0000305" key="2"/>
<name>NOSR_STUST</name>
<accession>Q00790</accession>
<reference key="1">
    <citation type="journal article" date="1992" name="J. Bacteriol.">
        <title>NosR, a membrane-bound regulatory component necessary for expression of nitrous oxide reductase in denitrifying Pseudomonas stutzeri.</title>
        <authorList>
            <person name="Cuypers H."/>
            <person name="Viebrock-Sambale A."/>
            <person name="Zumft W.G."/>
        </authorList>
    </citation>
    <scope>NUCLEOTIDE SEQUENCE [GENOMIC DNA]</scope>
    <source>
        <strain>ATCC 14405 / Zobell / Isolate MK21</strain>
    </source>
</reference>
<reference key="2">
    <citation type="journal article" date="1988" name="J. Bacteriol.">
        <title>Molecular cloning, heterologous expression, and primary structure of the structural gene for the copper enzyme nitrous oxide reductase from denitrifying Pseudomonas stutzeri.</title>
        <authorList>
            <person name="Viebrock A."/>
            <person name="Zumft W.G."/>
        </authorList>
    </citation>
    <scope>NUCLEOTIDE SEQUENCE [GENOMIC DNA] OF 657-724</scope>
    <source>
        <strain>ATCC 14405 / Zobell / Isolate MK21</strain>
    </source>
</reference>
<organism>
    <name type="scientific">Stutzerimonas stutzeri</name>
    <name type="common">Pseudomonas stutzeri</name>
    <dbReference type="NCBI Taxonomy" id="316"/>
    <lineage>
        <taxon>Bacteria</taxon>
        <taxon>Pseudomonadati</taxon>
        <taxon>Pseudomonadota</taxon>
        <taxon>Gammaproteobacteria</taxon>
        <taxon>Pseudomonadales</taxon>
        <taxon>Pseudomonadaceae</taxon>
        <taxon>Stutzerimonas</taxon>
    </lineage>
</organism>
<keyword id="KW-0010">Activator</keyword>
<keyword id="KW-1003">Cell membrane</keyword>
<keyword id="KW-0238">DNA-binding</keyword>
<keyword id="KW-0472">Membrane</keyword>
<keyword id="KW-0804">Transcription</keyword>
<keyword id="KW-0805">Transcription regulation</keyword>
<comment type="function">
    <text>Transcriptional activator of the nitrous-oxide reductase gene NosZ.</text>
</comment>
<comment type="subcellular location">
    <subcellularLocation>
        <location evidence="2">Cell membrane</location>
        <topology evidence="2">Peripheral membrane protein</topology>
    </subcellularLocation>
</comment>
<comment type="similarity">
    <text evidence="2">To P.denitrificans NirI.</text>
</comment>
<dbReference type="EMBL" id="X53676">
    <property type="protein sequence ID" value="CAA78380.1"/>
    <property type="molecule type" value="Genomic_DNA"/>
</dbReference>
<dbReference type="PIR" id="A42953">
    <property type="entry name" value="A42953"/>
</dbReference>
<dbReference type="RefSeq" id="WP_003279974.1">
    <property type="nucleotide sequence ID" value="NZ_CP036186.1"/>
</dbReference>
<dbReference type="eggNOG" id="COG0348">
    <property type="taxonomic scope" value="Bacteria"/>
</dbReference>
<dbReference type="eggNOG" id="COG3901">
    <property type="taxonomic scope" value="Bacteria"/>
</dbReference>
<dbReference type="GO" id="GO:0005886">
    <property type="term" value="C:plasma membrane"/>
    <property type="evidence" value="ECO:0007669"/>
    <property type="project" value="UniProtKB-SubCell"/>
</dbReference>
<dbReference type="GO" id="GO:0003677">
    <property type="term" value="F:DNA binding"/>
    <property type="evidence" value="ECO:0007669"/>
    <property type="project" value="UniProtKB-KW"/>
</dbReference>
<dbReference type="GO" id="GO:0010181">
    <property type="term" value="F:FMN binding"/>
    <property type="evidence" value="ECO:0007669"/>
    <property type="project" value="InterPro"/>
</dbReference>
<dbReference type="GO" id="GO:0045893">
    <property type="term" value="P:positive regulation of DNA-templated transcription"/>
    <property type="evidence" value="ECO:0007669"/>
    <property type="project" value="InterPro"/>
</dbReference>
<dbReference type="InterPro" id="IPR017896">
    <property type="entry name" value="4Fe4S_Fe-S-bd"/>
</dbReference>
<dbReference type="InterPro" id="IPR007329">
    <property type="entry name" value="FMN-bd"/>
</dbReference>
<dbReference type="InterPro" id="IPR011399">
    <property type="entry name" value="NosR"/>
</dbReference>
<dbReference type="InterPro" id="IPR052378">
    <property type="entry name" value="NosR_regulator"/>
</dbReference>
<dbReference type="NCBIfam" id="NF046105">
    <property type="entry name" value="TransRegNosR"/>
    <property type="match status" value="1"/>
</dbReference>
<dbReference type="PANTHER" id="PTHR30224">
    <property type="entry name" value="ELECTRON TRANSPORT PROTEIN"/>
    <property type="match status" value="1"/>
</dbReference>
<dbReference type="PANTHER" id="PTHR30224:SF4">
    <property type="entry name" value="ELECTRON TRANSPORT PROTEIN YCCM-RELATED"/>
    <property type="match status" value="1"/>
</dbReference>
<dbReference type="Pfam" id="PF12801">
    <property type="entry name" value="Fer4_5"/>
    <property type="match status" value="2"/>
</dbReference>
<dbReference type="Pfam" id="PF04205">
    <property type="entry name" value="FMN_bind"/>
    <property type="match status" value="1"/>
</dbReference>
<dbReference type="PIRSF" id="PIRSF036354">
    <property type="entry name" value="NosR"/>
    <property type="match status" value="1"/>
</dbReference>
<dbReference type="SMART" id="SM00900">
    <property type="entry name" value="FMN_bind"/>
    <property type="match status" value="1"/>
</dbReference>
<dbReference type="SUPFAM" id="SSF54862">
    <property type="entry name" value="4Fe-4S ferredoxins"/>
    <property type="match status" value="1"/>
</dbReference>